<organism>
    <name type="scientific">Salmonella schwarzengrund (strain CVM19633)</name>
    <dbReference type="NCBI Taxonomy" id="439843"/>
    <lineage>
        <taxon>Bacteria</taxon>
        <taxon>Pseudomonadati</taxon>
        <taxon>Pseudomonadota</taxon>
        <taxon>Gammaproteobacteria</taxon>
        <taxon>Enterobacterales</taxon>
        <taxon>Enterobacteriaceae</taxon>
        <taxon>Salmonella</taxon>
    </lineage>
</organism>
<dbReference type="EMBL" id="CP001127">
    <property type="protein sequence ID" value="ACF91707.1"/>
    <property type="molecule type" value="Genomic_DNA"/>
</dbReference>
<dbReference type="SMR" id="B4TPL2"/>
<dbReference type="KEGG" id="sew:SeSA_A4212"/>
<dbReference type="HOGENOM" id="CLU_033732_1_0_6"/>
<dbReference type="Proteomes" id="UP000001865">
    <property type="component" value="Chromosome"/>
</dbReference>
<dbReference type="GO" id="GO:0005829">
    <property type="term" value="C:cytosol"/>
    <property type="evidence" value="ECO:0007669"/>
    <property type="project" value="TreeGrafter"/>
</dbReference>
<dbReference type="GO" id="GO:0005525">
    <property type="term" value="F:GTP binding"/>
    <property type="evidence" value="ECO:0007669"/>
    <property type="project" value="UniProtKB-UniRule"/>
</dbReference>
<dbReference type="GO" id="GO:0046872">
    <property type="term" value="F:metal ion binding"/>
    <property type="evidence" value="ECO:0007669"/>
    <property type="project" value="UniProtKB-KW"/>
</dbReference>
<dbReference type="GO" id="GO:0000917">
    <property type="term" value="P:division septum assembly"/>
    <property type="evidence" value="ECO:0007669"/>
    <property type="project" value="UniProtKB-KW"/>
</dbReference>
<dbReference type="CDD" id="cd01876">
    <property type="entry name" value="YihA_EngB"/>
    <property type="match status" value="1"/>
</dbReference>
<dbReference type="FunFam" id="3.40.50.300:FF:000098">
    <property type="entry name" value="Probable GTP-binding protein EngB"/>
    <property type="match status" value="1"/>
</dbReference>
<dbReference type="Gene3D" id="3.40.50.300">
    <property type="entry name" value="P-loop containing nucleotide triphosphate hydrolases"/>
    <property type="match status" value="1"/>
</dbReference>
<dbReference type="HAMAP" id="MF_00321">
    <property type="entry name" value="GTPase_EngB"/>
    <property type="match status" value="1"/>
</dbReference>
<dbReference type="InterPro" id="IPR030393">
    <property type="entry name" value="G_ENGB_dom"/>
</dbReference>
<dbReference type="InterPro" id="IPR006073">
    <property type="entry name" value="GTP-bd"/>
</dbReference>
<dbReference type="InterPro" id="IPR019987">
    <property type="entry name" value="GTP-bd_ribosome_bio_YsxC"/>
</dbReference>
<dbReference type="InterPro" id="IPR027417">
    <property type="entry name" value="P-loop_NTPase"/>
</dbReference>
<dbReference type="NCBIfam" id="TIGR03598">
    <property type="entry name" value="GTPase_YsxC"/>
    <property type="match status" value="1"/>
</dbReference>
<dbReference type="PANTHER" id="PTHR11649:SF13">
    <property type="entry name" value="ENGB-TYPE G DOMAIN-CONTAINING PROTEIN"/>
    <property type="match status" value="1"/>
</dbReference>
<dbReference type="PANTHER" id="PTHR11649">
    <property type="entry name" value="MSS1/TRME-RELATED GTP-BINDING PROTEIN"/>
    <property type="match status" value="1"/>
</dbReference>
<dbReference type="Pfam" id="PF01926">
    <property type="entry name" value="MMR_HSR1"/>
    <property type="match status" value="1"/>
</dbReference>
<dbReference type="SUPFAM" id="SSF52540">
    <property type="entry name" value="P-loop containing nucleoside triphosphate hydrolases"/>
    <property type="match status" value="1"/>
</dbReference>
<dbReference type="PROSITE" id="PS51706">
    <property type="entry name" value="G_ENGB"/>
    <property type="match status" value="1"/>
</dbReference>
<protein>
    <recommendedName>
        <fullName evidence="1">Probable GTP-binding protein EngB</fullName>
    </recommendedName>
</protein>
<keyword id="KW-0131">Cell cycle</keyword>
<keyword id="KW-0132">Cell division</keyword>
<keyword id="KW-0342">GTP-binding</keyword>
<keyword id="KW-0460">Magnesium</keyword>
<keyword id="KW-0479">Metal-binding</keyword>
<keyword id="KW-0547">Nucleotide-binding</keyword>
<keyword id="KW-0717">Septation</keyword>
<evidence type="ECO:0000255" key="1">
    <source>
        <dbReference type="HAMAP-Rule" id="MF_00321"/>
    </source>
</evidence>
<feature type="chain" id="PRO_1000116004" description="Probable GTP-binding protein EngB">
    <location>
        <begin position="1"/>
        <end position="210"/>
    </location>
</feature>
<feature type="domain" description="EngB-type G" evidence="1">
    <location>
        <begin position="25"/>
        <end position="199"/>
    </location>
</feature>
<feature type="binding site" evidence="1">
    <location>
        <begin position="33"/>
        <end position="40"/>
    </location>
    <ligand>
        <name>GTP</name>
        <dbReference type="ChEBI" id="CHEBI:37565"/>
    </ligand>
</feature>
<feature type="binding site" evidence="1">
    <location>
        <position position="40"/>
    </location>
    <ligand>
        <name>Mg(2+)</name>
        <dbReference type="ChEBI" id="CHEBI:18420"/>
    </ligand>
</feature>
<feature type="binding site" evidence="1">
    <location>
        <begin position="60"/>
        <end position="64"/>
    </location>
    <ligand>
        <name>GTP</name>
        <dbReference type="ChEBI" id="CHEBI:37565"/>
    </ligand>
</feature>
<feature type="binding site" evidence="1">
    <location>
        <position position="62"/>
    </location>
    <ligand>
        <name>Mg(2+)</name>
        <dbReference type="ChEBI" id="CHEBI:18420"/>
    </ligand>
</feature>
<feature type="binding site" evidence="1">
    <location>
        <begin position="78"/>
        <end position="81"/>
    </location>
    <ligand>
        <name>GTP</name>
        <dbReference type="ChEBI" id="CHEBI:37565"/>
    </ligand>
</feature>
<feature type="binding site" evidence="1">
    <location>
        <begin position="145"/>
        <end position="148"/>
    </location>
    <ligand>
        <name>GTP</name>
        <dbReference type="ChEBI" id="CHEBI:37565"/>
    </ligand>
</feature>
<feature type="binding site" evidence="1">
    <location>
        <begin position="178"/>
        <end position="180"/>
    </location>
    <ligand>
        <name>GTP</name>
        <dbReference type="ChEBI" id="CHEBI:37565"/>
    </ligand>
</feature>
<comment type="function">
    <text evidence="1">Necessary for normal cell division and for the maintenance of normal septation.</text>
</comment>
<comment type="cofactor">
    <cofactor evidence="1">
        <name>Mg(2+)</name>
        <dbReference type="ChEBI" id="CHEBI:18420"/>
    </cofactor>
</comment>
<comment type="similarity">
    <text evidence="1">Belongs to the TRAFAC class TrmE-Era-EngA-EngB-Septin-like GTPase superfamily. EngB GTPase family.</text>
</comment>
<proteinExistence type="inferred from homology"/>
<sequence length="210" mass="23554">MTNLNYQQTHFVMSAPDIRHLPSDCGIEVAFAGRSNAGKSSALNTLTNQKSLARTSKTPGRTQLINLFEVVDGKRLVDLPGYGYAEVPEEMKRKWQRALGEYLEKRQSLQGLVVLMDIRHPLKDLDQQMIQWAVESNIQVLVLLTKADKLASGARKAQLNMVREAVLAFNGDVQVEAFSSLKKQGVDKLRQKLDSWFSELAPVEEIQDGE</sequence>
<gene>
    <name evidence="1" type="primary">engB</name>
    <name type="ordered locus">SeSA_A4212</name>
</gene>
<name>ENGB_SALSV</name>
<reference key="1">
    <citation type="journal article" date="2011" name="J. Bacteriol.">
        <title>Comparative genomics of 28 Salmonella enterica isolates: evidence for CRISPR-mediated adaptive sublineage evolution.</title>
        <authorList>
            <person name="Fricke W.F."/>
            <person name="Mammel M.K."/>
            <person name="McDermott P.F."/>
            <person name="Tartera C."/>
            <person name="White D.G."/>
            <person name="Leclerc J.E."/>
            <person name="Ravel J."/>
            <person name="Cebula T.A."/>
        </authorList>
    </citation>
    <scope>NUCLEOTIDE SEQUENCE [LARGE SCALE GENOMIC DNA]</scope>
    <source>
        <strain>CVM19633</strain>
    </source>
</reference>
<accession>B4TPL2</accession>